<evidence type="ECO:0000255" key="1"/>
<evidence type="ECO:0000269" key="2">
    <source>
    </source>
</evidence>
<evidence type="ECO:0000269" key="3">
    <source>
    </source>
</evidence>
<evidence type="ECO:0000269" key="4">
    <source>
    </source>
</evidence>
<evidence type="ECO:0000269" key="5">
    <source>
    </source>
</evidence>
<organism>
    <name type="scientific">Homo sapiens</name>
    <name type="common">Human</name>
    <dbReference type="NCBI Taxonomy" id="9606"/>
    <lineage>
        <taxon>Eukaryota</taxon>
        <taxon>Metazoa</taxon>
        <taxon>Chordata</taxon>
        <taxon>Craniata</taxon>
        <taxon>Vertebrata</taxon>
        <taxon>Euteleostomi</taxon>
        <taxon>Mammalia</taxon>
        <taxon>Eutheria</taxon>
        <taxon>Euarchontoglires</taxon>
        <taxon>Primates</taxon>
        <taxon>Haplorrhini</taxon>
        <taxon>Catarrhini</taxon>
        <taxon>Hominidae</taxon>
        <taxon>Homo</taxon>
    </lineage>
</organism>
<name>CCD68_HUMAN</name>
<feature type="chain" id="PRO_0000264611" description="Coiled-coil domain-containing protein 68">
    <location>
        <begin position="1"/>
        <end position="335"/>
    </location>
</feature>
<feature type="coiled-coil region" evidence="1">
    <location>
        <begin position="101"/>
        <end position="305"/>
    </location>
</feature>
<feature type="sequence variant" id="VAR_050762" description="In dbSNP:rs34751112." evidence="3">
    <original>V</original>
    <variation>A</variation>
    <location>
        <position position="249"/>
    </location>
</feature>
<protein>
    <recommendedName>
        <fullName>Coiled-coil domain-containing protein 68</fullName>
    </recommendedName>
    <alternativeName>
        <fullName>Cutaneous T-cell lymphoma-associated antigen se57-1</fullName>
        <shortName>CTCL-associated antigen se57-1</shortName>
    </alternativeName>
</protein>
<accession>Q9H2F9</accession>
<accession>B2R9I3</accession>
<dbReference type="EMBL" id="AF273051">
    <property type="protein sequence ID" value="AAG34911.1"/>
    <property type="molecule type" value="mRNA"/>
</dbReference>
<dbReference type="EMBL" id="AK313793">
    <property type="protein sequence ID" value="BAG36530.1"/>
    <property type="molecule type" value="mRNA"/>
</dbReference>
<dbReference type="EMBL" id="BC029508">
    <property type="protein sequence ID" value="AAH29508.1"/>
    <property type="molecule type" value="mRNA"/>
</dbReference>
<dbReference type="CCDS" id="CCDS11959.1"/>
<dbReference type="RefSeq" id="NP_001137301.1">
    <property type="nucleotide sequence ID" value="NM_001143829.2"/>
</dbReference>
<dbReference type="RefSeq" id="NP_079490.1">
    <property type="nucleotide sequence ID" value="NM_025214.3"/>
</dbReference>
<dbReference type="RefSeq" id="XP_006722615.1">
    <property type="nucleotide sequence ID" value="XM_006722552.4"/>
</dbReference>
<dbReference type="RefSeq" id="XP_011524500.1">
    <property type="nucleotide sequence ID" value="XM_011526198.2"/>
</dbReference>
<dbReference type="RefSeq" id="XP_011524501.1">
    <property type="nucleotide sequence ID" value="XM_011526199.3"/>
</dbReference>
<dbReference type="RefSeq" id="XP_011524502.1">
    <property type="nucleotide sequence ID" value="XM_011526200.3"/>
</dbReference>
<dbReference type="RefSeq" id="XP_011524503.1">
    <property type="nucleotide sequence ID" value="XM_011526201.3"/>
</dbReference>
<dbReference type="RefSeq" id="XP_047293820.1">
    <property type="nucleotide sequence ID" value="XM_047437864.1"/>
</dbReference>
<dbReference type="RefSeq" id="XP_047293821.1">
    <property type="nucleotide sequence ID" value="XM_047437865.1"/>
</dbReference>
<dbReference type="RefSeq" id="XP_047293822.1">
    <property type="nucleotide sequence ID" value="XM_047437866.1"/>
</dbReference>
<dbReference type="RefSeq" id="XP_054175180.1">
    <property type="nucleotide sequence ID" value="XM_054319205.1"/>
</dbReference>
<dbReference type="RefSeq" id="XP_054175181.1">
    <property type="nucleotide sequence ID" value="XM_054319206.1"/>
</dbReference>
<dbReference type="RefSeq" id="XP_054175182.1">
    <property type="nucleotide sequence ID" value="XM_054319207.1"/>
</dbReference>
<dbReference type="RefSeq" id="XP_054175183.1">
    <property type="nucleotide sequence ID" value="XM_054319208.1"/>
</dbReference>
<dbReference type="RefSeq" id="XP_054175184.1">
    <property type="nucleotide sequence ID" value="XM_054319209.1"/>
</dbReference>
<dbReference type="RefSeq" id="XP_054175185.1">
    <property type="nucleotide sequence ID" value="XM_054319210.1"/>
</dbReference>
<dbReference type="RefSeq" id="XP_054175186.1">
    <property type="nucleotide sequence ID" value="XM_054319211.1"/>
</dbReference>
<dbReference type="SMR" id="Q9H2F9"/>
<dbReference type="BioGRID" id="123235">
    <property type="interactions" value="24"/>
</dbReference>
<dbReference type="FunCoup" id="Q9H2F9">
    <property type="interactions" value="65"/>
</dbReference>
<dbReference type="IntAct" id="Q9H2F9">
    <property type="interactions" value="27"/>
</dbReference>
<dbReference type="STRING" id="9606.ENSP00000466690"/>
<dbReference type="iPTMnet" id="Q9H2F9"/>
<dbReference type="PhosphoSitePlus" id="Q9H2F9"/>
<dbReference type="BioMuta" id="CCDC68"/>
<dbReference type="DMDM" id="74733556"/>
<dbReference type="jPOST" id="Q9H2F9"/>
<dbReference type="MassIVE" id="Q9H2F9"/>
<dbReference type="PaxDb" id="9606-ENSP00000466690"/>
<dbReference type="PeptideAtlas" id="Q9H2F9"/>
<dbReference type="ProteomicsDB" id="80543"/>
<dbReference type="Antibodypedia" id="53345">
    <property type="antibodies" value="89 antibodies from 21 providers"/>
</dbReference>
<dbReference type="DNASU" id="80323"/>
<dbReference type="Ensembl" id="ENST00000337363.8">
    <property type="protein sequence ID" value="ENSP00000337209.3"/>
    <property type="gene ID" value="ENSG00000166510.14"/>
</dbReference>
<dbReference type="Ensembl" id="ENST00000432185.5">
    <property type="protein sequence ID" value="ENSP00000413406.1"/>
    <property type="gene ID" value="ENSG00000166510.14"/>
</dbReference>
<dbReference type="Ensembl" id="ENST00000591504.6">
    <property type="protein sequence ID" value="ENSP00000466690.1"/>
    <property type="gene ID" value="ENSG00000166510.14"/>
</dbReference>
<dbReference type="GeneID" id="80323"/>
<dbReference type="KEGG" id="hsa:80323"/>
<dbReference type="MANE-Select" id="ENST00000591504.6">
    <property type="protein sequence ID" value="ENSP00000466690.1"/>
    <property type="RefSeq nucleotide sequence ID" value="NM_025214.3"/>
    <property type="RefSeq protein sequence ID" value="NP_079490.1"/>
</dbReference>
<dbReference type="UCSC" id="uc002lfs.4">
    <property type="organism name" value="human"/>
</dbReference>
<dbReference type="AGR" id="HGNC:24350"/>
<dbReference type="CTD" id="80323"/>
<dbReference type="DisGeNET" id="80323"/>
<dbReference type="GeneCards" id="CCDC68"/>
<dbReference type="HGNC" id="HGNC:24350">
    <property type="gene designation" value="CCDC68"/>
</dbReference>
<dbReference type="HPA" id="ENSG00000166510">
    <property type="expression patterns" value="Tissue enhanced (intestine, placenta)"/>
</dbReference>
<dbReference type="MIM" id="616909">
    <property type="type" value="gene"/>
</dbReference>
<dbReference type="neXtProt" id="NX_Q9H2F9"/>
<dbReference type="OpenTargets" id="ENSG00000166510"/>
<dbReference type="PharmGKB" id="PA143485420"/>
<dbReference type="VEuPathDB" id="HostDB:ENSG00000166510"/>
<dbReference type="eggNOG" id="ENOG502RXID">
    <property type="taxonomic scope" value="Eukaryota"/>
</dbReference>
<dbReference type="GeneTree" id="ENSGT00950000183065"/>
<dbReference type="HOGENOM" id="CLU_071853_0_0_1"/>
<dbReference type="InParanoid" id="Q9H2F9"/>
<dbReference type="OMA" id="ETEYIKQ"/>
<dbReference type="OrthoDB" id="9391002at2759"/>
<dbReference type="PAN-GO" id="Q9H2F9">
    <property type="GO annotations" value="2 GO annotations based on evolutionary models"/>
</dbReference>
<dbReference type="PhylomeDB" id="Q9H2F9"/>
<dbReference type="PathwayCommons" id="Q9H2F9"/>
<dbReference type="SignaLink" id="Q9H2F9"/>
<dbReference type="BioGRID-ORCS" id="80323">
    <property type="hits" value="7 hits in 1150 CRISPR screens"/>
</dbReference>
<dbReference type="ChiTaRS" id="CCDC68">
    <property type="organism name" value="human"/>
</dbReference>
<dbReference type="GenomeRNAi" id="80323"/>
<dbReference type="Pharos" id="Q9H2F9">
    <property type="development level" value="Tbio"/>
</dbReference>
<dbReference type="PRO" id="PR:Q9H2F9"/>
<dbReference type="Proteomes" id="UP000005640">
    <property type="component" value="Chromosome 18"/>
</dbReference>
<dbReference type="RNAct" id="Q9H2F9">
    <property type="molecule type" value="protein"/>
</dbReference>
<dbReference type="Bgee" id="ENSG00000166510">
    <property type="expression patterns" value="Expressed in rectum and 133 other cell types or tissues"/>
</dbReference>
<dbReference type="ExpressionAtlas" id="Q9H2F9">
    <property type="expression patterns" value="baseline and differential"/>
</dbReference>
<dbReference type="GO" id="GO:0120103">
    <property type="term" value="C:centriolar subdistal appendage"/>
    <property type="evidence" value="ECO:0000314"/>
    <property type="project" value="GO_Central"/>
</dbReference>
<dbReference type="GO" id="GO:0005814">
    <property type="term" value="C:centriole"/>
    <property type="evidence" value="ECO:0000314"/>
    <property type="project" value="GO_Central"/>
</dbReference>
<dbReference type="GO" id="GO:0005737">
    <property type="term" value="C:cytoplasm"/>
    <property type="evidence" value="ECO:0007669"/>
    <property type="project" value="UniProtKB-KW"/>
</dbReference>
<dbReference type="GO" id="GO:0034454">
    <property type="term" value="P:microtubule anchoring at centrosome"/>
    <property type="evidence" value="ECO:0000315"/>
    <property type="project" value="GO_Central"/>
</dbReference>
<dbReference type="GO" id="GO:0008104">
    <property type="term" value="P:protein localization"/>
    <property type="evidence" value="ECO:0000315"/>
    <property type="project" value="GO_Central"/>
</dbReference>
<dbReference type="FunFam" id="1.10.287.1490:FF:000016">
    <property type="entry name" value="Coiled-coil domain containing 68"/>
    <property type="match status" value="1"/>
</dbReference>
<dbReference type="Gene3D" id="1.10.287.1490">
    <property type="match status" value="1"/>
</dbReference>
<dbReference type="InterPro" id="IPR051375">
    <property type="entry name" value="Tuftelin_GRINL1A/MYZAP/CCD68"/>
</dbReference>
<dbReference type="PANTHER" id="PTHR23171:SF3">
    <property type="entry name" value="COILED-COIL DOMAIN-CONTAINING PROTEIN 68"/>
    <property type="match status" value="1"/>
</dbReference>
<dbReference type="PANTHER" id="PTHR23171">
    <property type="entry name" value="GDOWN1"/>
    <property type="match status" value="1"/>
</dbReference>
<keyword id="KW-0175">Coiled coil</keyword>
<keyword id="KW-0963">Cytoplasm</keyword>
<keyword id="KW-0206">Cytoskeleton</keyword>
<keyword id="KW-1267">Proteomics identification</keyword>
<keyword id="KW-1185">Reference proteome</keyword>
<sequence length="335" mass="38869">MTTVTVTTEIPPRDKMEDNSALYESTSAHIIEETEYVKKIRTTLQKIRTQMFKDEIRHDSTNHKLDAKHCGNLQQGSDSEMDPSCCSLDLLMKKIKGKDLQLLEMNKENEVLKIKLQASREAGAAALRNVAQRLFENYQTQSEEVRKKQEDSKQLLQVNKLEKEQKLKQHVENLNQVAEKLEEKHSQITELENLVQRMEKEKRTLLERKLSLENKLLQLKSSATYGKSCQDLQREISILQEQISHLQFVIHSQHQNLRSVIQEMEGLKNNLKEQDKRIENLREKVNILEAQNKELKTQVALSSETPRTKVSKAVSTSELKTEGVSPYLMLIRLRK</sequence>
<comment type="function">
    <text evidence="5">Centriolar protein required for centriole subdistal appendage assembly and microtubule anchoring in interphase cells (PubMed:28422092). Together with CCDC120, cooperate with subdistal appendage components ODF2, NIN and CEP170 for hierarchical subdistal appendage assembly (PubMed:28422092).</text>
</comment>
<comment type="subunit">
    <text>Interacts with CEP170 (PubMed:28422092).</text>
</comment>
<comment type="interaction">
    <interactant intactId="EBI-2813327">
        <id>Q9H2F9</id>
    </interactant>
    <interactant intactId="EBI-1104799">
        <id>Q5SW79</id>
        <label>CEP170</label>
    </interactant>
    <organismsDiffer>false</organismsDiffer>
    <experiments>7</experiments>
</comment>
<comment type="interaction">
    <interactant intactId="EBI-2813327">
        <id>Q9H2F9</id>
    </interactant>
    <interactant intactId="EBI-1176455">
        <id>P63172</id>
        <label>DYNLT1</label>
    </interactant>
    <organismsDiffer>false</organismsDiffer>
    <experiments>3</experiments>
</comment>
<comment type="interaction">
    <interactant intactId="EBI-2813327">
        <id>Q9H2F9</id>
    </interactant>
    <interactant intactId="EBI-3044087">
        <id>Q7Z3Y8</id>
        <label>KRT27</label>
    </interactant>
    <organismsDiffer>false</organismsDiffer>
    <experiments>3</experiments>
</comment>
<comment type="interaction">
    <interactant intactId="EBI-2813327">
        <id>Q9H2F9</id>
    </interactant>
    <interactant intactId="EBI-1105213">
        <id>Q9UBB9</id>
        <label>TFIP11</label>
    </interactant>
    <organismsDiffer>false</organismsDiffer>
    <experiments>8</experiments>
</comment>
<comment type="subcellular location">
    <subcellularLocation>
        <location evidence="5">Cytoplasm</location>
        <location evidence="5">Cytoskeleton</location>
        <location evidence="5">Microtubule organizing center</location>
        <location evidence="5">Centrosome</location>
        <location evidence="5">Centriole</location>
    </subcellularLocation>
    <text evidence="5">Localizes to the subdistal appendages of centrioles (PubMed:28422092).</text>
</comment>
<comment type="tissue specificity">
    <text evidence="2 4">Expressed in bone marrow, colon, small intestine, spleen, testis, trachea and cutaneous T-cell lymphoma (CTCL).</text>
</comment>
<reference key="1">
    <citation type="journal article" date="2001" name="Proc. Natl. Acad. Sci. U.S.A.">
        <title>Serological detection of cutaneous T-cell lymphoma-associated antigens.</title>
        <authorList>
            <person name="Eichmueller S."/>
            <person name="Usener D."/>
            <person name="Dummer R."/>
            <person name="Stein A."/>
            <person name="Thiel D."/>
            <person name="Schadendorf D."/>
        </authorList>
    </citation>
    <scope>NUCLEOTIDE SEQUENCE [MRNA]</scope>
    <scope>TISSUE SPECIFICITY</scope>
    <source>
        <tissue>Testis</tissue>
    </source>
</reference>
<reference key="2">
    <citation type="journal article" date="2004" name="Nat. Genet.">
        <title>Complete sequencing and characterization of 21,243 full-length human cDNAs.</title>
        <authorList>
            <person name="Ota T."/>
            <person name="Suzuki Y."/>
            <person name="Nishikawa T."/>
            <person name="Otsuki T."/>
            <person name="Sugiyama T."/>
            <person name="Irie R."/>
            <person name="Wakamatsu A."/>
            <person name="Hayashi K."/>
            <person name="Sato H."/>
            <person name="Nagai K."/>
            <person name="Kimura K."/>
            <person name="Makita H."/>
            <person name="Sekine M."/>
            <person name="Obayashi M."/>
            <person name="Nishi T."/>
            <person name="Shibahara T."/>
            <person name="Tanaka T."/>
            <person name="Ishii S."/>
            <person name="Yamamoto J."/>
            <person name="Saito K."/>
            <person name="Kawai Y."/>
            <person name="Isono Y."/>
            <person name="Nakamura Y."/>
            <person name="Nagahari K."/>
            <person name="Murakami K."/>
            <person name="Yasuda T."/>
            <person name="Iwayanagi T."/>
            <person name="Wagatsuma M."/>
            <person name="Shiratori A."/>
            <person name="Sudo H."/>
            <person name="Hosoiri T."/>
            <person name="Kaku Y."/>
            <person name="Kodaira H."/>
            <person name="Kondo H."/>
            <person name="Sugawara M."/>
            <person name="Takahashi M."/>
            <person name="Kanda K."/>
            <person name="Yokoi T."/>
            <person name="Furuya T."/>
            <person name="Kikkawa E."/>
            <person name="Omura Y."/>
            <person name="Abe K."/>
            <person name="Kamihara K."/>
            <person name="Katsuta N."/>
            <person name="Sato K."/>
            <person name="Tanikawa M."/>
            <person name="Yamazaki M."/>
            <person name="Ninomiya K."/>
            <person name="Ishibashi T."/>
            <person name="Yamashita H."/>
            <person name="Murakawa K."/>
            <person name="Fujimori K."/>
            <person name="Tanai H."/>
            <person name="Kimata M."/>
            <person name="Watanabe M."/>
            <person name="Hiraoka S."/>
            <person name="Chiba Y."/>
            <person name="Ishida S."/>
            <person name="Ono Y."/>
            <person name="Takiguchi S."/>
            <person name="Watanabe S."/>
            <person name="Yosida M."/>
            <person name="Hotuta T."/>
            <person name="Kusano J."/>
            <person name="Kanehori K."/>
            <person name="Takahashi-Fujii A."/>
            <person name="Hara H."/>
            <person name="Tanase T.-O."/>
            <person name="Nomura Y."/>
            <person name="Togiya S."/>
            <person name="Komai F."/>
            <person name="Hara R."/>
            <person name="Takeuchi K."/>
            <person name="Arita M."/>
            <person name="Imose N."/>
            <person name="Musashino K."/>
            <person name="Yuuki H."/>
            <person name="Oshima A."/>
            <person name="Sasaki N."/>
            <person name="Aotsuka S."/>
            <person name="Yoshikawa Y."/>
            <person name="Matsunawa H."/>
            <person name="Ichihara T."/>
            <person name="Shiohata N."/>
            <person name="Sano S."/>
            <person name="Moriya S."/>
            <person name="Momiyama H."/>
            <person name="Satoh N."/>
            <person name="Takami S."/>
            <person name="Terashima Y."/>
            <person name="Suzuki O."/>
            <person name="Nakagawa S."/>
            <person name="Senoh A."/>
            <person name="Mizoguchi H."/>
            <person name="Goto Y."/>
            <person name="Shimizu F."/>
            <person name="Wakebe H."/>
            <person name="Hishigaki H."/>
            <person name="Watanabe T."/>
            <person name="Sugiyama A."/>
            <person name="Takemoto M."/>
            <person name="Kawakami B."/>
            <person name="Yamazaki M."/>
            <person name="Watanabe K."/>
            <person name="Kumagai A."/>
            <person name="Itakura S."/>
            <person name="Fukuzumi Y."/>
            <person name="Fujimori Y."/>
            <person name="Komiyama M."/>
            <person name="Tashiro H."/>
            <person name="Tanigami A."/>
            <person name="Fujiwara T."/>
            <person name="Ono T."/>
            <person name="Yamada K."/>
            <person name="Fujii Y."/>
            <person name="Ozaki K."/>
            <person name="Hirao M."/>
            <person name="Ohmori Y."/>
            <person name="Kawabata A."/>
            <person name="Hikiji T."/>
            <person name="Kobatake N."/>
            <person name="Inagaki H."/>
            <person name="Ikema Y."/>
            <person name="Okamoto S."/>
            <person name="Okitani R."/>
            <person name="Kawakami T."/>
            <person name="Noguchi S."/>
            <person name="Itoh T."/>
            <person name="Shigeta K."/>
            <person name="Senba T."/>
            <person name="Matsumura K."/>
            <person name="Nakajima Y."/>
            <person name="Mizuno T."/>
            <person name="Morinaga M."/>
            <person name="Sasaki M."/>
            <person name="Togashi T."/>
            <person name="Oyama M."/>
            <person name="Hata H."/>
            <person name="Watanabe M."/>
            <person name="Komatsu T."/>
            <person name="Mizushima-Sugano J."/>
            <person name="Satoh T."/>
            <person name="Shirai Y."/>
            <person name="Takahashi Y."/>
            <person name="Nakagawa K."/>
            <person name="Okumura K."/>
            <person name="Nagase T."/>
            <person name="Nomura N."/>
            <person name="Kikuchi H."/>
            <person name="Masuho Y."/>
            <person name="Yamashita R."/>
            <person name="Nakai K."/>
            <person name="Yada T."/>
            <person name="Nakamura Y."/>
            <person name="Ohara O."/>
            <person name="Isogai T."/>
            <person name="Sugano S."/>
        </authorList>
    </citation>
    <scope>NUCLEOTIDE SEQUENCE [LARGE SCALE MRNA]</scope>
    <scope>VARIANT ALA-249</scope>
    <source>
        <tissue>Trachea</tissue>
    </source>
</reference>
<reference key="3">
    <citation type="journal article" date="2004" name="Genome Res.">
        <title>The status, quality, and expansion of the NIH full-length cDNA project: the Mammalian Gene Collection (MGC).</title>
        <authorList>
            <consortium name="The MGC Project Team"/>
        </authorList>
    </citation>
    <scope>NUCLEOTIDE SEQUENCE [LARGE SCALE MRNA]</scope>
    <source>
        <tissue>Testis</tissue>
    </source>
</reference>
<reference key="4">
    <citation type="journal article" date="2004" name="Cancer Lett.">
        <title>Tissue expression and sero-reactivity of tumor-specific antigens in colorectal cancer.</title>
        <authorList>
            <person name="Gerhardt A."/>
            <person name="Usener D."/>
            <person name="Keese M."/>
            <person name="Sturm J."/>
            <person name="Schadendorf D."/>
            <person name="Eichmueller S."/>
        </authorList>
    </citation>
    <scope>TISSUE SPECIFICITY</scope>
</reference>
<reference key="5">
    <citation type="journal article" date="2017" name="Nat. Commun.">
        <title>Hierarchical assembly of centriole subdistal appendages via centrosome binding proteins CCDC120 and CCDC68.</title>
        <authorList>
            <person name="Huang N."/>
            <person name="Xia Y."/>
            <person name="Zhang D."/>
            <person name="Wang S."/>
            <person name="Bao Y."/>
            <person name="He R."/>
            <person name="Teng J."/>
            <person name="Chen J."/>
        </authorList>
    </citation>
    <scope>FUNCTION</scope>
    <scope>SUBCELLULAR LOCATION</scope>
    <scope>INTERACTION WITH CEP170</scope>
</reference>
<gene>
    <name type="primary">CCDC68</name>
</gene>
<proteinExistence type="evidence at protein level"/>